<dbReference type="EC" id="2.7.7.3" evidence="1"/>
<dbReference type="EMBL" id="CP000653">
    <property type="protein sequence ID" value="ABP58795.1"/>
    <property type="molecule type" value="Genomic_DNA"/>
</dbReference>
<dbReference type="RefSeq" id="WP_011915371.1">
    <property type="nucleotide sequence ID" value="NC_009436.1"/>
</dbReference>
<dbReference type="PDB" id="8ZN2">
    <property type="method" value="X-ray"/>
    <property type="resolution" value="2.65 A"/>
    <property type="chains" value="A/B/C/D/E/F=1-159"/>
</dbReference>
<dbReference type="PDB" id="8ZN3">
    <property type="method" value="X-ray"/>
    <property type="resolution" value="2.41 A"/>
    <property type="chains" value="A/B/C/D/E/F=1-159"/>
</dbReference>
<dbReference type="PDB" id="9IYE">
    <property type="method" value="X-ray"/>
    <property type="resolution" value="2.39 A"/>
    <property type="chains" value="A/B/C/D/E/F=1-159"/>
</dbReference>
<dbReference type="PDB" id="9IYF">
    <property type="method" value="X-ray"/>
    <property type="resolution" value="2.37 A"/>
    <property type="chains" value="A/B/C/D/E/F=1-159"/>
</dbReference>
<dbReference type="PDB" id="9IYG">
    <property type="method" value="X-ray"/>
    <property type="resolution" value="2.60 A"/>
    <property type="chains" value="A/B/C/D/E/F=1-159"/>
</dbReference>
<dbReference type="PDB" id="9IYH">
    <property type="method" value="X-ray"/>
    <property type="resolution" value="2.25 A"/>
    <property type="chains" value="A/B/C/D/E/F=1-159"/>
</dbReference>
<dbReference type="PDB" id="9KPY">
    <property type="method" value="X-ray"/>
    <property type="resolution" value="2.20 A"/>
    <property type="chains" value="A/B/C/D/E/F=1-159"/>
</dbReference>
<dbReference type="PDBsum" id="8ZN2"/>
<dbReference type="PDBsum" id="8ZN3"/>
<dbReference type="PDBsum" id="9IYE"/>
<dbReference type="PDBsum" id="9IYF"/>
<dbReference type="PDBsum" id="9IYG"/>
<dbReference type="PDBsum" id="9IYH"/>
<dbReference type="PDBsum" id="9KPY"/>
<dbReference type="SMR" id="A4W515"/>
<dbReference type="STRING" id="399742.Ent638_0105"/>
<dbReference type="KEGG" id="ent:Ent638_0105"/>
<dbReference type="eggNOG" id="COG0669">
    <property type="taxonomic scope" value="Bacteria"/>
</dbReference>
<dbReference type="HOGENOM" id="CLU_100149_0_1_6"/>
<dbReference type="OrthoDB" id="9806661at2"/>
<dbReference type="UniPathway" id="UPA00241">
    <property type="reaction ID" value="UER00355"/>
</dbReference>
<dbReference type="Proteomes" id="UP000000230">
    <property type="component" value="Chromosome"/>
</dbReference>
<dbReference type="GO" id="GO:0005737">
    <property type="term" value="C:cytoplasm"/>
    <property type="evidence" value="ECO:0007669"/>
    <property type="project" value="UniProtKB-SubCell"/>
</dbReference>
<dbReference type="GO" id="GO:0005524">
    <property type="term" value="F:ATP binding"/>
    <property type="evidence" value="ECO:0007669"/>
    <property type="project" value="UniProtKB-KW"/>
</dbReference>
<dbReference type="GO" id="GO:0004595">
    <property type="term" value="F:pantetheine-phosphate adenylyltransferase activity"/>
    <property type="evidence" value="ECO:0007669"/>
    <property type="project" value="UniProtKB-UniRule"/>
</dbReference>
<dbReference type="GO" id="GO:0015937">
    <property type="term" value="P:coenzyme A biosynthetic process"/>
    <property type="evidence" value="ECO:0007669"/>
    <property type="project" value="UniProtKB-UniRule"/>
</dbReference>
<dbReference type="CDD" id="cd02163">
    <property type="entry name" value="PPAT"/>
    <property type="match status" value="1"/>
</dbReference>
<dbReference type="FunFam" id="3.40.50.620:FF:000012">
    <property type="entry name" value="Phosphopantetheine adenylyltransferase"/>
    <property type="match status" value="1"/>
</dbReference>
<dbReference type="Gene3D" id="3.40.50.620">
    <property type="entry name" value="HUPs"/>
    <property type="match status" value="1"/>
</dbReference>
<dbReference type="HAMAP" id="MF_00151">
    <property type="entry name" value="PPAT_bact"/>
    <property type="match status" value="1"/>
</dbReference>
<dbReference type="InterPro" id="IPR004821">
    <property type="entry name" value="Cyt_trans-like"/>
</dbReference>
<dbReference type="InterPro" id="IPR001980">
    <property type="entry name" value="PPAT"/>
</dbReference>
<dbReference type="InterPro" id="IPR014729">
    <property type="entry name" value="Rossmann-like_a/b/a_fold"/>
</dbReference>
<dbReference type="NCBIfam" id="TIGR01510">
    <property type="entry name" value="coaD_prev_kdtB"/>
    <property type="match status" value="1"/>
</dbReference>
<dbReference type="NCBIfam" id="TIGR00125">
    <property type="entry name" value="cyt_tran_rel"/>
    <property type="match status" value="1"/>
</dbReference>
<dbReference type="PANTHER" id="PTHR21342">
    <property type="entry name" value="PHOSPHOPANTETHEINE ADENYLYLTRANSFERASE"/>
    <property type="match status" value="1"/>
</dbReference>
<dbReference type="PANTHER" id="PTHR21342:SF1">
    <property type="entry name" value="PHOSPHOPANTETHEINE ADENYLYLTRANSFERASE"/>
    <property type="match status" value="1"/>
</dbReference>
<dbReference type="Pfam" id="PF01467">
    <property type="entry name" value="CTP_transf_like"/>
    <property type="match status" value="1"/>
</dbReference>
<dbReference type="PRINTS" id="PR01020">
    <property type="entry name" value="LPSBIOSNTHSS"/>
</dbReference>
<dbReference type="SUPFAM" id="SSF52374">
    <property type="entry name" value="Nucleotidylyl transferase"/>
    <property type="match status" value="1"/>
</dbReference>
<proteinExistence type="evidence at protein level"/>
<gene>
    <name evidence="1" type="primary">coaD</name>
    <name type="ordered locus">Ent638_0105</name>
</gene>
<comment type="function">
    <text evidence="1">Reversibly transfers an adenylyl group from ATP to 4'-phosphopantetheine, yielding dephospho-CoA (dPCoA) and pyrophosphate.</text>
</comment>
<comment type="catalytic activity">
    <reaction evidence="1">
        <text>(R)-4'-phosphopantetheine + ATP + H(+) = 3'-dephospho-CoA + diphosphate</text>
        <dbReference type="Rhea" id="RHEA:19801"/>
        <dbReference type="ChEBI" id="CHEBI:15378"/>
        <dbReference type="ChEBI" id="CHEBI:30616"/>
        <dbReference type="ChEBI" id="CHEBI:33019"/>
        <dbReference type="ChEBI" id="CHEBI:57328"/>
        <dbReference type="ChEBI" id="CHEBI:61723"/>
        <dbReference type="EC" id="2.7.7.3"/>
    </reaction>
</comment>
<comment type="cofactor">
    <cofactor evidence="1">
        <name>Mg(2+)</name>
        <dbReference type="ChEBI" id="CHEBI:18420"/>
    </cofactor>
</comment>
<comment type="pathway">
    <text evidence="1">Cofactor biosynthesis; coenzyme A biosynthesis; CoA from (R)-pantothenate: step 4/5.</text>
</comment>
<comment type="subunit">
    <text evidence="1">Homohexamer.</text>
</comment>
<comment type="subcellular location">
    <subcellularLocation>
        <location evidence="1">Cytoplasm</location>
    </subcellularLocation>
</comment>
<comment type="similarity">
    <text evidence="1">Belongs to the bacterial CoaD family.</text>
</comment>
<feature type="chain" id="PRO_1000058163" description="Phosphopantetheine adenylyltransferase">
    <location>
        <begin position="1"/>
        <end position="159"/>
    </location>
</feature>
<feature type="binding site" evidence="1">
    <location>
        <begin position="10"/>
        <end position="11"/>
    </location>
    <ligand>
        <name>ATP</name>
        <dbReference type="ChEBI" id="CHEBI:30616"/>
    </ligand>
</feature>
<feature type="binding site" evidence="1">
    <location>
        <position position="10"/>
    </location>
    <ligand>
        <name>substrate</name>
    </ligand>
</feature>
<feature type="binding site" evidence="1">
    <location>
        <position position="18"/>
    </location>
    <ligand>
        <name>ATP</name>
        <dbReference type="ChEBI" id="CHEBI:30616"/>
    </ligand>
</feature>
<feature type="binding site" evidence="1">
    <location>
        <position position="42"/>
    </location>
    <ligand>
        <name>substrate</name>
    </ligand>
</feature>
<feature type="binding site" evidence="1">
    <location>
        <position position="74"/>
    </location>
    <ligand>
        <name>substrate</name>
    </ligand>
</feature>
<feature type="binding site" evidence="1">
    <location>
        <position position="88"/>
    </location>
    <ligand>
        <name>substrate</name>
    </ligand>
</feature>
<feature type="binding site" evidence="1">
    <location>
        <begin position="89"/>
        <end position="91"/>
    </location>
    <ligand>
        <name>ATP</name>
        <dbReference type="ChEBI" id="CHEBI:30616"/>
    </ligand>
</feature>
<feature type="binding site" evidence="1">
    <location>
        <position position="99"/>
    </location>
    <ligand>
        <name>ATP</name>
        <dbReference type="ChEBI" id="CHEBI:30616"/>
    </ligand>
</feature>
<feature type="binding site" evidence="1">
    <location>
        <begin position="124"/>
        <end position="130"/>
    </location>
    <ligand>
        <name>ATP</name>
        <dbReference type="ChEBI" id="CHEBI:30616"/>
    </ligand>
</feature>
<feature type="site" description="Transition state stabilizer" evidence="1">
    <location>
        <position position="18"/>
    </location>
</feature>
<feature type="strand" evidence="2">
    <location>
        <begin position="4"/>
        <end position="9"/>
    </location>
</feature>
<feature type="helix" evidence="2">
    <location>
        <begin position="16"/>
        <end position="28"/>
    </location>
</feature>
<feature type="strand" evidence="2">
    <location>
        <begin position="29"/>
        <end position="39"/>
    </location>
</feature>
<feature type="helix" evidence="2">
    <location>
        <begin position="48"/>
        <end position="58"/>
    </location>
</feature>
<feature type="turn" evidence="2">
    <location>
        <begin position="59"/>
        <end position="61"/>
    </location>
</feature>
<feature type="strand" evidence="2">
    <location>
        <begin position="65"/>
        <end position="70"/>
    </location>
</feature>
<feature type="helix" evidence="2">
    <location>
        <begin position="74"/>
        <end position="80"/>
    </location>
</feature>
<feature type="strand" evidence="2">
    <location>
        <begin position="85"/>
        <end position="89"/>
    </location>
</feature>
<feature type="helix" evidence="2">
    <location>
        <begin position="93"/>
        <end position="109"/>
    </location>
</feature>
<feature type="strand" evidence="2">
    <location>
        <begin position="114"/>
        <end position="118"/>
    </location>
</feature>
<feature type="helix" evidence="2">
    <location>
        <begin position="122"/>
        <end position="124"/>
    </location>
</feature>
<feature type="helix" evidence="2">
    <location>
        <begin position="129"/>
        <end position="137"/>
    </location>
</feature>
<feature type="helix" evidence="2">
    <location>
        <begin position="143"/>
        <end position="145"/>
    </location>
</feature>
<feature type="helix" evidence="2">
    <location>
        <begin position="148"/>
        <end position="158"/>
    </location>
</feature>
<protein>
    <recommendedName>
        <fullName evidence="1">Phosphopantetheine adenylyltransferase</fullName>
        <ecNumber evidence="1">2.7.7.3</ecNumber>
    </recommendedName>
    <alternativeName>
        <fullName evidence="1">Dephospho-CoA pyrophosphorylase</fullName>
    </alternativeName>
    <alternativeName>
        <fullName evidence="1">Pantetheine-phosphate adenylyltransferase</fullName>
        <shortName evidence="1">PPAT</shortName>
    </alternativeName>
</protein>
<keyword id="KW-0002">3D-structure</keyword>
<keyword id="KW-0067">ATP-binding</keyword>
<keyword id="KW-0173">Coenzyme A biosynthesis</keyword>
<keyword id="KW-0963">Cytoplasm</keyword>
<keyword id="KW-0460">Magnesium</keyword>
<keyword id="KW-0547">Nucleotide-binding</keyword>
<keyword id="KW-0548">Nucleotidyltransferase</keyword>
<keyword id="KW-0808">Transferase</keyword>
<reference key="1">
    <citation type="journal article" date="2010" name="PLoS Genet.">
        <title>Genome sequence of the plant growth promoting endophytic bacterium Enterobacter sp. 638.</title>
        <authorList>
            <person name="Taghavi S."/>
            <person name="van der Lelie D."/>
            <person name="Hoffman A."/>
            <person name="Zhang Y.B."/>
            <person name="Walla M.D."/>
            <person name="Vangronsveld J."/>
            <person name="Newman L."/>
            <person name="Monchy S."/>
        </authorList>
    </citation>
    <scope>NUCLEOTIDE SEQUENCE [LARGE SCALE GENOMIC DNA]</scope>
    <source>
        <strain>638</strain>
    </source>
</reference>
<evidence type="ECO:0000255" key="1">
    <source>
        <dbReference type="HAMAP-Rule" id="MF_00151"/>
    </source>
</evidence>
<evidence type="ECO:0007829" key="2">
    <source>
        <dbReference type="PDB" id="9KPY"/>
    </source>
</evidence>
<organism>
    <name type="scientific">Enterobacter sp. (strain 638)</name>
    <dbReference type="NCBI Taxonomy" id="399742"/>
    <lineage>
        <taxon>Bacteria</taxon>
        <taxon>Pseudomonadati</taxon>
        <taxon>Pseudomonadota</taxon>
        <taxon>Gammaproteobacteria</taxon>
        <taxon>Enterobacterales</taxon>
        <taxon>Enterobacteriaceae</taxon>
        <taxon>Enterobacter</taxon>
    </lineage>
</organism>
<name>COAD_ENT38</name>
<sequence>MSTKAIYPGTFDPITNGHIDIITRAASMFDRVILAIAASPSKKPMFDLEERVALATTALQHLPNVEVMGFSDLMANFARAQQANILIRGLRAVADFEYEMQLAHMNRHLMPELESVFLMPSKEWSFISSSLVKEVARHAGDVTHFLPANVHQALMEKLK</sequence>
<accession>A4W515</accession>